<organism>
    <name type="scientific">Clostridium kluyveri (strain ATCC 8527 / DSM 555 / NBRC 12016 / NCIMB 10680 / K1)</name>
    <dbReference type="NCBI Taxonomy" id="431943"/>
    <lineage>
        <taxon>Bacteria</taxon>
        <taxon>Bacillati</taxon>
        <taxon>Bacillota</taxon>
        <taxon>Clostridia</taxon>
        <taxon>Eubacteriales</taxon>
        <taxon>Clostridiaceae</taxon>
        <taxon>Clostridium</taxon>
    </lineage>
</organism>
<accession>A5N4K7</accession>
<evidence type="ECO:0000255" key="1">
    <source>
        <dbReference type="HAMAP-Rule" id="MF_01274"/>
    </source>
</evidence>
<dbReference type="EC" id="2.7.1.33" evidence="1"/>
<dbReference type="EMBL" id="CP000673">
    <property type="protein sequence ID" value="EDK32238.1"/>
    <property type="molecule type" value="Genomic_DNA"/>
</dbReference>
<dbReference type="RefSeq" id="WP_011988764.1">
    <property type="nucleotide sequence ID" value="NC_009706.1"/>
</dbReference>
<dbReference type="SMR" id="A5N4K7"/>
<dbReference type="STRING" id="431943.CKL_0174"/>
<dbReference type="KEGG" id="ckl:CKL_0174"/>
<dbReference type="eggNOG" id="COG1521">
    <property type="taxonomic scope" value="Bacteria"/>
</dbReference>
<dbReference type="HOGENOM" id="CLU_066627_1_0_9"/>
<dbReference type="UniPathway" id="UPA00241">
    <property type="reaction ID" value="UER00352"/>
</dbReference>
<dbReference type="Proteomes" id="UP000002411">
    <property type="component" value="Chromosome"/>
</dbReference>
<dbReference type="GO" id="GO:0005737">
    <property type="term" value="C:cytoplasm"/>
    <property type="evidence" value="ECO:0007669"/>
    <property type="project" value="UniProtKB-SubCell"/>
</dbReference>
<dbReference type="GO" id="GO:0005524">
    <property type="term" value="F:ATP binding"/>
    <property type="evidence" value="ECO:0007669"/>
    <property type="project" value="UniProtKB-UniRule"/>
</dbReference>
<dbReference type="GO" id="GO:0046872">
    <property type="term" value="F:metal ion binding"/>
    <property type="evidence" value="ECO:0007669"/>
    <property type="project" value="UniProtKB-KW"/>
</dbReference>
<dbReference type="GO" id="GO:0004594">
    <property type="term" value="F:pantothenate kinase activity"/>
    <property type="evidence" value="ECO:0007669"/>
    <property type="project" value="UniProtKB-UniRule"/>
</dbReference>
<dbReference type="GO" id="GO:0015937">
    <property type="term" value="P:coenzyme A biosynthetic process"/>
    <property type="evidence" value="ECO:0007669"/>
    <property type="project" value="UniProtKB-UniRule"/>
</dbReference>
<dbReference type="CDD" id="cd24015">
    <property type="entry name" value="ASKHA_NBD_PanK-III"/>
    <property type="match status" value="1"/>
</dbReference>
<dbReference type="Gene3D" id="3.30.420.40">
    <property type="match status" value="2"/>
</dbReference>
<dbReference type="HAMAP" id="MF_01274">
    <property type="entry name" value="Pantothen_kinase_3"/>
    <property type="match status" value="1"/>
</dbReference>
<dbReference type="InterPro" id="IPR043129">
    <property type="entry name" value="ATPase_NBD"/>
</dbReference>
<dbReference type="InterPro" id="IPR004619">
    <property type="entry name" value="Type_III_PanK"/>
</dbReference>
<dbReference type="NCBIfam" id="TIGR00671">
    <property type="entry name" value="baf"/>
    <property type="match status" value="1"/>
</dbReference>
<dbReference type="NCBIfam" id="NF009847">
    <property type="entry name" value="PRK13318.1-5"/>
    <property type="match status" value="1"/>
</dbReference>
<dbReference type="NCBIfam" id="NF009848">
    <property type="entry name" value="PRK13318.1-6"/>
    <property type="match status" value="1"/>
</dbReference>
<dbReference type="NCBIfam" id="NF009855">
    <property type="entry name" value="PRK13321.1"/>
    <property type="match status" value="1"/>
</dbReference>
<dbReference type="PANTHER" id="PTHR34265">
    <property type="entry name" value="TYPE III PANTOTHENATE KINASE"/>
    <property type="match status" value="1"/>
</dbReference>
<dbReference type="PANTHER" id="PTHR34265:SF1">
    <property type="entry name" value="TYPE III PANTOTHENATE KINASE"/>
    <property type="match status" value="1"/>
</dbReference>
<dbReference type="Pfam" id="PF03309">
    <property type="entry name" value="Pan_kinase"/>
    <property type="match status" value="1"/>
</dbReference>
<dbReference type="SUPFAM" id="SSF53067">
    <property type="entry name" value="Actin-like ATPase domain"/>
    <property type="match status" value="2"/>
</dbReference>
<proteinExistence type="inferred from homology"/>
<protein>
    <recommendedName>
        <fullName evidence="1">Type III pantothenate kinase</fullName>
        <ecNumber evidence="1">2.7.1.33</ecNumber>
    </recommendedName>
    <alternativeName>
        <fullName evidence="1">PanK-III</fullName>
    </alternativeName>
    <alternativeName>
        <fullName evidence="1">Pantothenic acid kinase</fullName>
    </alternativeName>
</protein>
<sequence>MILVLDVGNTNIVLGVYDDRELISVWRLSTDSKRTADEYGVQVIDLFLQSKLKPEDITGSIISSVVPTIMYSLEHMIIKYFQVSPIIVGPGVKTGINVKYDNPREVGADRIVNAVAAHEIYNRSLIIIDFGTATTFCAVTSAGDYLGGAICPGIKISSSALFEMAAKLPRVEIIRPQNIIGKNTVSSMQSGIVYGYIGQVDYIVKKMKMEMMDLGEEEPLVIATGGLAKLINEGTKSIDIIDSVLTLTGLRLIYEKNKE</sequence>
<keyword id="KW-0067">ATP-binding</keyword>
<keyword id="KW-0173">Coenzyme A biosynthesis</keyword>
<keyword id="KW-0963">Cytoplasm</keyword>
<keyword id="KW-0418">Kinase</keyword>
<keyword id="KW-0479">Metal-binding</keyword>
<keyword id="KW-0547">Nucleotide-binding</keyword>
<keyword id="KW-0630">Potassium</keyword>
<keyword id="KW-1185">Reference proteome</keyword>
<keyword id="KW-0808">Transferase</keyword>
<feature type="chain" id="PRO_1000085849" description="Type III pantothenate kinase">
    <location>
        <begin position="1"/>
        <end position="259"/>
    </location>
</feature>
<feature type="active site" description="Proton acceptor" evidence="1">
    <location>
        <position position="109"/>
    </location>
</feature>
<feature type="binding site" evidence="1">
    <location>
        <begin position="6"/>
        <end position="13"/>
    </location>
    <ligand>
        <name>ATP</name>
        <dbReference type="ChEBI" id="CHEBI:30616"/>
    </ligand>
</feature>
<feature type="binding site" evidence="1">
    <location>
        <position position="100"/>
    </location>
    <ligand>
        <name>substrate</name>
    </ligand>
</feature>
<feature type="binding site" evidence="1">
    <location>
        <begin position="107"/>
        <end position="110"/>
    </location>
    <ligand>
        <name>substrate</name>
    </ligand>
</feature>
<feature type="binding site" evidence="1">
    <location>
        <position position="129"/>
    </location>
    <ligand>
        <name>K(+)</name>
        <dbReference type="ChEBI" id="CHEBI:29103"/>
    </ligand>
</feature>
<feature type="binding site" evidence="1">
    <location>
        <position position="132"/>
    </location>
    <ligand>
        <name>ATP</name>
        <dbReference type="ChEBI" id="CHEBI:30616"/>
    </ligand>
</feature>
<feature type="binding site" evidence="1">
    <location>
        <position position="184"/>
    </location>
    <ligand>
        <name>substrate</name>
    </ligand>
</feature>
<reference key="1">
    <citation type="journal article" date="2008" name="Proc. Natl. Acad. Sci. U.S.A.">
        <title>The genome of Clostridium kluyveri, a strict anaerobe with unique metabolic features.</title>
        <authorList>
            <person name="Seedorf H."/>
            <person name="Fricke W.F."/>
            <person name="Veith B."/>
            <person name="Brueggemann H."/>
            <person name="Liesegang H."/>
            <person name="Strittmatter A."/>
            <person name="Miethke M."/>
            <person name="Buckel W."/>
            <person name="Hinderberger J."/>
            <person name="Li F."/>
            <person name="Hagemeier C."/>
            <person name="Thauer R.K."/>
            <person name="Gottschalk G."/>
        </authorList>
    </citation>
    <scope>NUCLEOTIDE SEQUENCE [LARGE SCALE GENOMIC DNA]</scope>
    <source>
        <strain>ATCC 8527 / DSM 555 / NBRC 12016 / NCIMB 10680 / K1</strain>
    </source>
</reference>
<comment type="function">
    <text evidence="1">Catalyzes the phosphorylation of pantothenate (Pan), the first step in CoA biosynthesis.</text>
</comment>
<comment type="catalytic activity">
    <reaction evidence="1">
        <text>(R)-pantothenate + ATP = (R)-4'-phosphopantothenate + ADP + H(+)</text>
        <dbReference type="Rhea" id="RHEA:16373"/>
        <dbReference type="ChEBI" id="CHEBI:10986"/>
        <dbReference type="ChEBI" id="CHEBI:15378"/>
        <dbReference type="ChEBI" id="CHEBI:29032"/>
        <dbReference type="ChEBI" id="CHEBI:30616"/>
        <dbReference type="ChEBI" id="CHEBI:456216"/>
        <dbReference type="EC" id="2.7.1.33"/>
    </reaction>
</comment>
<comment type="cofactor">
    <cofactor evidence="1">
        <name>NH4(+)</name>
        <dbReference type="ChEBI" id="CHEBI:28938"/>
    </cofactor>
    <cofactor evidence="1">
        <name>K(+)</name>
        <dbReference type="ChEBI" id="CHEBI:29103"/>
    </cofactor>
    <text evidence="1">A monovalent cation. Ammonium or potassium.</text>
</comment>
<comment type="pathway">
    <text evidence="1">Cofactor biosynthesis; coenzyme A biosynthesis; CoA from (R)-pantothenate: step 1/5.</text>
</comment>
<comment type="subunit">
    <text evidence="1">Homodimer.</text>
</comment>
<comment type="subcellular location">
    <subcellularLocation>
        <location evidence="1">Cytoplasm</location>
    </subcellularLocation>
</comment>
<comment type="similarity">
    <text evidence="1">Belongs to the type III pantothenate kinase family.</text>
</comment>
<gene>
    <name evidence="1" type="primary">coaX</name>
    <name type="ordered locus">CKL_0174</name>
</gene>
<name>COAX_CLOK5</name>